<gene>
    <name evidence="1" type="primary">pgk</name>
    <name type="ordered locus">LEUM_1921</name>
</gene>
<protein>
    <recommendedName>
        <fullName evidence="1">Phosphoglycerate kinase</fullName>
        <ecNumber evidence="1">2.7.2.3</ecNumber>
    </recommendedName>
</protein>
<reference key="1">
    <citation type="journal article" date="2006" name="Proc. Natl. Acad. Sci. U.S.A.">
        <title>Comparative genomics of the lactic acid bacteria.</title>
        <authorList>
            <person name="Makarova K.S."/>
            <person name="Slesarev A."/>
            <person name="Wolf Y.I."/>
            <person name="Sorokin A."/>
            <person name="Mirkin B."/>
            <person name="Koonin E.V."/>
            <person name="Pavlov A."/>
            <person name="Pavlova N."/>
            <person name="Karamychev V."/>
            <person name="Polouchine N."/>
            <person name="Shakhova V."/>
            <person name="Grigoriev I."/>
            <person name="Lou Y."/>
            <person name="Rohksar D."/>
            <person name="Lucas S."/>
            <person name="Huang K."/>
            <person name="Goodstein D.M."/>
            <person name="Hawkins T."/>
            <person name="Plengvidhya V."/>
            <person name="Welker D."/>
            <person name="Hughes J."/>
            <person name="Goh Y."/>
            <person name="Benson A."/>
            <person name="Baldwin K."/>
            <person name="Lee J.-H."/>
            <person name="Diaz-Muniz I."/>
            <person name="Dosti B."/>
            <person name="Smeianov V."/>
            <person name="Wechter W."/>
            <person name="Barabote R."/>
            <person name="Lorca G."/>
            <person name="Altermann E."/>
            <person name="Barrangou R."/>
            <person name="Ganesan B."/>
            <person name="Xie Y."/>
            <person name="Rawsthorne H."/>
            <person name="Tamir D."/>
            <person name="Parker C."/>
            <person name="Breidt F."/>
            <person name="Broadbent J.R."/>
            <person name="Hutkins R."/>
            <person name="O'Sullivan D."/>
            <person name="Steele J."/>
            <person name="Unlu G."/>
            <person name="Saier M.H. Jr."/>
            <person name="Klaenhammer T."/>
            <person name="Richardson P."/>
            <person name="Kozyavkin S."/>
            <person name="Weimer B.C."/>
            <person name="Mills D.A."/>
        </authorList>
    </citation>
    <scope>NUCLEOTIDE SEQUENCE [LARGE SCALE GENOMIC DNA]</scope>
    <source>
        <strain>ATCC 8293 / DSM 20343 / BCRC 11652 / CCM 1803 / JCM 6124 / NCDO 523 / NBRC 100496 / NCIMB 8023 / NCTC 12954 / NRRL B-1118 / 37Y</strain>
    </source>
</reference>
<keyword id="KW-0067">ATP-binding</keyword>
<keyword id="KW-0963">Cytoplasm</keyword>
<keyword id="KW-0324">Glycolysis</keyword>
<keyword id="KW-0418">Kinase</keyword>
<keyword id="KW-0547">Nucleotide-binding</keyword>
<keyword id="KW-1185">Reference proteome</keyword>
<keyword id="KW-0808">Transferase</keyword>
<organism>
    <name type="scientific">Leuconostoc mesenteroides subsp. mesenteroides (strain ATCC 8293 / DSM 20343 / BCRC 11652 / CCM 1803 / JCM 6124 / NCDO 523 / NBRC 100496 / NCIMB 8023 / NCTC 12954 / NRRL B-1118 / 37Y)</name>
    <dbReference type="NCBI Taxonomy" id="203120"/>
    <lineage>
        <taxon>Bacteria</taxon>
        <taxon>Bacillati</taxon>
        <taxon>Bacillota</taxon>
        <taxon>Bacilli</taxon>
        <taxon>Lactobacillales</taxon>
        <taxon>Lactobacillaceae</taxon>
        <taxon>Leuconostoc</taxon>
    </lineage>
</organism>
<proteinExistence type="inferred from homology"/>
<comment type="catalytic activity">
    <reaction evidence="1">
        <text>(2R)-3-phosphoglycerate + ATP = (2R)-3-phospho-glyceroyl phosphate + ADP</text>
        <dbReference type="Rhea" id="RHEA:14801"/>
        <dbReference type="ChEBI" id="CHEBI:30616"/>
        <dbReference type="ChEBI" id="CHEBI:57604"/>
        <dbReference type="ChEBI" id="CHEBI:58272"/>
        <dbReference type="ChEBI" id="CHEBI:456216"/>
        <dbReference type="EC" id="2.7.2.3"/>
    </reaction>
</comment>
<comment type="pathway">
    <text evidence="1">Carbohydrate degradation; glycolysis; pyruvate from D-glyceraldehyde 3-phosphate: step 2/5.</text>
</comment>
<comment type="subunit">
    <text evidence="1">Monomer.</text>
</comment>
<comment type="subcellular location">
    <subcellularLocation>
        <location evidence="1">Cytoplasm</location>
    </subcellularLocation>
</comment>
<comment type="similarity">
    <text evidence="1">Belongs to the phosphoglycerate kinase family.</text>
</comment>
<name>PGK_LEUMM</name>
<sequence length="405" mass="42728">MAKLTVSDLELSGKKVLMRVDFNVPIKAGVIGNDNRIVAALPTIKYVLENNGRAILFSHLGRIKSEDDKKELSLAPVAARLGELLGKDVKFVPQTRGEELESAINALQDGEVLMVENTRFEDVVDGEVVKNESKNNPELGKYWASLGDDLFINDAFGTAHRAHASNVGIASNVSQAAAGFLMEKEIKFLGDAVANPVRPFVAIIGGAKVSDKIEIVKSLLNKADKVIVGGGMAYTFDAAKGNKIGNSLFEADKVELAKELMAEAGDKLVLPIDSIAADAFSNDAKTEVVDAEDGIPDGYMGLDIGPKSVKLLQDTLSDAKTVVWNGPMGVFEMSNFAKGTLAIGEELVKVTENGGTTIVGGGDSTAAVQQLGVADKLTHISTGGGASLEYLEGKELPGIASISEK</sequence>
<evidence type="ECO:0000255" key="1">
    <source>
        <dbReference type="HAMAP-Rule" id="MF_00145"/>
    </source>
</evidence>
<dbReference type="EC" id="2.7.2.3" evidence="1"/>
<dbReference type="EMBL" id="CP000414">
    <property type="protein sequence ID" value="ABJ62994.1"/>
    <property type="molecule type" value="Genomic_DNA"/>
</dbReference>
<dbReference type="RefSeq" id="WP_011680468.1">
    <property type="nucleotide sequence ID" value="NC_008531.1"/>
</dbReference>
<dbReference type="SMR" id="Q03UX8"/>
<dbReference type="EnsemblBacteria" id="ABJ62994">
    <property type="protein sequence ID" value="ABJ62994"/>
    <property type="gene ID" value="LEUM_1921"/>
</dbReference>
<dbReference type="GeneID" id="29576941"/>
<dbReference type="KEGG" id="lme:LEUM_1921"/>
<dbReference type="eggNOG" id="COG0126">
    <property type="taxonomic scope" value="Bacteria"/>
</dbReference>
<dbReference type="HOGENOM" id="CLU_025427_0_2_9"/>
<dbReference type="UniPathway" id="UPA00109">
    <property type="reaction ID" value="UER00185"/>
</dbReference>
<dbReference type="Proteomes" id="UP000000362">
    <property type="component" value="Chromosome"/>
</dbReference>
<dbReference type="GO" id="GO:0005829">
    <property type="term" value="C:cytosol"/>
    <property type="evidence" value="ECO:0007669"/>
    <property type="project" value="TreeGrafter"/>
</dbReference>
<dbReference type="GO" id="GO:0043531">
    <property type="term" value="F:ADP binding"/>
    <property type="evidence" value="ECO:0007669"/>
    <property type="project" value="TreeGrafter"/>
</dbReference>
<dbReference type="GO" id="GO:0005524">
    <property type="term" value="F:ATP binding"/>
    <property type="evidence" value="ECO:0007669"/>
    <property type="project" value="UniProtKB-KW"/>
</dbReference>
<dbReference type="GO" id="GO:0004618">
    <property type="term" value="F:phosphoglycerate kinase activity"/>
    <property type="evidence" value="ECO:0007669"/>
    <property type="project" value="UniProtKB-UniRule"/>
</dbReference>
<dbReference type="GO" id="GO:0006094">
    <property type="term" value="P:gluconeogenesis"/>
    <property type="evidence" value="ECO:0007669"/>
    <property type="project" value="TreeGrafter"/>
</dbReference>
<dbReference type="GO" id="GO:0006096">
    <property type="term" value="P:glycolytic process"/>
    <property type="evidence" value="ECO:0007669"/>
    <property type="project" value="UniProtKB-UniRule"/>
</dbReference>
<dbReference type="CDD" id="cd00318">
    <property type="entry name" value="Phosphoglycerate_kinase"/>
    <property type="match status" value="1"/>
</dbReference>
<dbReference type="FunFam" id="3.40.50.1260:FF:000007">
    <property type="entry name" value="Phosphoglycerate kinase"/>
    <property type="match status" value="1"/>
</dbReference>
<dbReference type="FunFam" id="3.40.50.1260:FF:000008">
    <property type="entry name" value="Phosphoglycerate kinase"/>
    <property type="match status" value="1"/>
</dbReference>
<dbReference type="Gene3D" id="3.40.50.1260">
    <property type="entry name" value="Phosphoglycerate kinase, N-terminal domain"/>
    <property type="match status" value="2"/>
</dbReference>
<dbReference type="HAMAP" id="MF_00145">
    <property type="entry name" value="Phosphoglyc_kinase"/>
    <property type="match status" value="1"/>
</dbReference>
<dbReference type="InterPro" id="IPR001576">
    <property type="entry name" value="Phosphoglycerate_kinase"/>
</dbReference>
<dbReference type="InterPro" id="IPR015911">
    <property type="entry name" value="Phosphoglycerate_kinase_CS"/>
</dbReference>
<dbReference type="InterPro" id="IPR015824">
    <property type="entry name" value="Phosphoglycerate_kinase_N"/>
</dbReference>
<dbReference type="InterPro" id="IPR036043">
    <property type="entry name" value="Phosphoglycerate_kinase_sf"/>
</dbReference>
<dbReference type="PANTHER" id="PTHR11406">
    <property type="entry name" value="PHOSPHOGLYCERATE KINASE"/>
    <property type="match status" value="1"/>
</dbReference>
<dbReference type="PANTHER" id="PTHR11406:SF23">
    <property type="entry name" value="PHOSPHOGLYCERATE KINASE 1, CHLOROPLASTIC-RELATED"/>
    <property type="match status" value="1"/>
</dbReference>
<dbReference type="Pfam" id="PF00162">
    <property type="entry name" value="PGK"/>
    <property type="match status" value="1"/>
</dbReference>
<dbReference type="PIRSF" id="PIRSF000724">
    <property type="entry name" value="Pgk"/>
    <property type="match status" value="1"/>
</dbReference>
<dbReference type="PRINTS" id="PR00477">
    <property type="entry name" value="PHGLYCKINASE"/>
</dbReference>
<dbReference type="SUPFAM" id="SSF53748">
    <property type="entry name" value="Phosphoglycerate kinase"/>
    <property type="match status" value="1"/>
</dbReference>
<dbReference type="PROSITE" id="PS00111">
    <property type="entry name" value="PGLYCERATE_KINASE"/>
    <property type="match status" value="1"/>
</dbReference>
<accession>Q03UX8</accession>
<feature type="chain" id="PRO_1000009627" description="Phosphoglycerate kinase">
    <location>
        <begin position="1"/>
        <end position="405"/>
    </location>
</feature>
<feature type="binding site" evidence="1">
    <location>
        <begin position="21"/>
        <end position="23"/>
    </location>
    <ligand>
        <name>substrate</name>
    </ligand>
</feature>
<feature type="binding site" evidence="1">
    <location>
        <position position="36"/>
    </location>
    <ligand>
        <name>substrate</name>
    </ligand>
</feature>
<feature type="binding site" evidence="1">
    <location>
        <begin position="59"/>
        <end position="62"/>
    </location>
    <ligand>
        <name>substrate</name>
    </ligand>
</feature>
<feature type="binding site" evidence="1">
    <location>
        <position position="119"/>
    </location>
    <ligand>
        <name>substrate</name>
    </ligand>
</feature>
<feature type="binding site" evidence="1">
    <location>
        <position position="161"/>
    </location>
    <ligand>
        <name>substrate</name>
    </ligand>
</feature>
<feature type="binding site" evidence="1">
    <location>
        <position position="212"/>
    </location>
    <ligand>
        <name>ATP</name>
        <dbReference type="ChEBI" id="CHEBI:30616"/>
    </ligand>
</feature>
<feature type="binding site" evidence="1">
    <location>
        <position position="301"/>
    </location>
    <ligand>
        <name>ATP</name>
        <dbReference type="ChEBI" id="CHEBI:30616"/>
    </ligand>
</feature>
<feature type="binding site" evidence="1">
    <location>
        <position position="332"/>
    </location>
    <ligand>
        <name>ATP</name>
        <dbReference type="ChEBI" id="CHEBI:30616"/>
    </ligand>
</feature>
<feature type="binding site" evidence="1">
    <location>
        <begin position="361"/>
        <end position="364"/>
    </location>
    <ligand>
        <name>ATP</name>
        <dbReference type="ChEBI" id="CHEBI:30616"/>
    </ligand>
</feature>